<gene>
    <name type="ordered locus">MIMI_R745</name>
</gene>
<organismHost>
    <name type="scientific">Acanthamoeba polyphaga</name>
    <name type="common">Amoeba</name>
    <dbReference type="NCBI Taxonomy" id="5757"/>
</organismHost>
<dbReference type="EMBL" id="AY653733">
    <property type="protein sequence ID" value="AAV51005.1"/>
    <property type="molecule type" value="Genomic_DNA"/>
</dbReference>
<dbReference type="SMR" id="Q5UNZ3"/>
<dbReference type="Proteomes" id="UP000001134">
    <property type="component" value="Genome"/>
</dbReference>
<proteinExistence type="predicted"/>
<sequence length="164" mass="19807">MFGENMCEYEADDIAEKISIKILKKYMRNKIYDTDNSNKPTNQFFCDLHILNKIIRYKCYRDDYERFVSEFIIHKLKYNFASVGYYVKPIIVTDKFELCFEYVVKCKIANHFVALVNSVILNEDSDKKDDKYYYCLIKKFCLNNEIDLKSDLFYYLSDYYCPKI</sequence>
<organism>
    <name type="scientific">Acanthamoeba polyphaga mimivirus</name>
    <name type="common">APMV</name>
    <dbReference type="NCBI Taxonomy" id="212035"/>
    <lineage>
        <taxon>Viruses</taxon>
        <taxon>Varidnaviria</taxon>
        <taxon>Bamfordvirae</taxon>
        <taxon>Nucleocytoviricota</taxon>
        <taxon>Megaviricetes</taxon>
        <taxon>Imitervirales</taxon>
        <taxon>Mimiviridae</taxon>
        <taxon>Megamimivirinae</taxon>
        <taxon>Mimivirus</taxon>
        <taxon>Mimivirus bradfordmassiliense</taxon>
    </lineage>
</organism>
<name>YR745_MIMIV</name>
<accession>Q5UNZ3</accession>
<keyword id="KW-1185">Reference proteome</keyword>
<reference key="1">
    <citation type="journal article" date="2004" name="Science">
        <title>The 1.2-megabase genome sequence of Mimivirus.</title>
        <authorList>
            <person name="Raoult D."/>
            <person name="Audic S."/>
            <person name="Robert C."/>
            <person name="Abergel C."/>
            <person name="Renesto P."/>
            <person name="Ogata H."/>
            <person name="La Scola B."/>
            <person name="Susan M."/>
            <person name="Claverie J.-M."/>
        </authorList>
    </citation>
    <scope>NUCLEOTIDE SEQUENCE [LARGE SCALE GENOMIC DNA]</scope>
    <source>
        <strain>Rowbotham-Bradford</strain>
    </source>
</reference>
<feature type="chain" id="PRO_0000071343" description="Uncharacterized protein R745">
    <location>
        <begin position="1"/>
        <end position="164"/>
    </location>
</feature>
<protein>
    <recommendedName>
        <fullName>Uncharacterized protein R745</fullName>
    </recommendedName>
</protein>